<feature type="chain" id="PRO_1000012081" description="Bis(5'-nucleosyl)-tetraphosphatase, symmetrical">
    <location>
        <begin position="1"/>
        <end position="293"/>
    </location>
</feature>
<evidence type="ECO:0000255" key="1">
    <source>
        <dbReference type="HAMAP-Rule" id="MF_00199"/>
    </source>
</evidence>
<sequence>MATYAVGDLQGCLEPLKCLLQQVAFDPALDRLWLVGDLVNRGPQSLETLRFLYGMRESLVCVLGNHDLHLLAAAKNIERLKKSDTLREILEAPDCAELMEWLRQQKLMHYDEQREVAMVHAGIPPQWSLRKALKYAEEVETALRDDNLLPPFLDGMYGNEPAKWDSDLKGVTRLRVITNYFTRMRFCTAEGKLDLKSKEGLDTAPPGYKPWFQHKERKTRGLRIIFGHWAALEGNVHEPGICALDTGCVWGGSLTLMNVDSGERLSCKCDEHGAALPTVAPLITESSPVSAPR</sequence>
<name>APAH_PSEPF</name>
<reference key="1">
    <citation type="journal article" date="2009" name="Genome Biol.">
        <title>Genomic and genetic analyses of diversity and plant interactions of Pseudomonas fluorescens.</title>
        <authorList>
            <person name="Silby M.W."/>
            <person name="Cerdeno-Tarraga A.M."/>
            <person name="Vernikos G.S."/>
            <person name="Giddens S.R."/>
            <person name="Jackson R.W."/>
            <person name="Preston G.M."/>
            <person name="Zhang X.-X."/>
            <person name="Moon C.D."/>
            <person name="Gehrig S.M."/>
            <person name="Godfrey S.A.C."/>
            <person name="Knight C.G."/>
            <person name="Malone J.G."/>
            <person name="Robinson Z."/>
            <person name="Spiers A.J."/>
            <person name="Harris S."/>
            <person name="Challis G.L."/>
            <person name="Yaxley A.M."/>
            <person name="Harris D."/>
            <person name="Seeger K."/>
            <person name="Murphy L."/>
            <person name="Rutter S."/>
            <person name="Squares R."/>
            <person name="Quail M.A."/>
            <person name="Saunders E."/>
            <person name="Mavromatis K."/>
            <person name="Brettin T.S."/>
            <person name="Bentley S.D."/>
            <person name="Hothersall J."/>
            <person name="Stephens E."/>
            <person name="Thomas C.M."/>
            <person name="Parkhill J."/>
            <person name="Levy S.B."/>
            <person name="Rainey P.B."/>
            <person name="Thomson N.R."/>
        </authorList>
    </citation>
    <scope>NUCLEOTIDE SEQUENCE [LARGE SCALE GENOMIC DNA]</scope>
    <source>
        <strain>Pf0-1</strain>
    </source>
</reference>
<keyword id="KW-0378">Hydrolase</keyword>
<proteinExistence type="inferred from homology"/>
<organism>
    <name type="scientific">Pseudomonas fluorescens (strain Pf0-1)</name>
    <dbReference type="NCBI Taxonomy" id="205922"/>
    <lineage>
        <taxon>Bacteria</taxon>
        <taxon>Pseudomonadati</taxon>
        <taxon>Pseudomonadota</taxon>
        <taxon>Gammaproteobacteria</taxon>
        <taxon>Pseudomonadales</taxon>
        <taxon>Pseudomonadaceae</taxon>
        <taxon>Pseudomonas</taxon>
    </lineage>
</organism>
<protein>
    <recommendedName>
        <fullName evidence="1">Bis(5'-nucleosyl)-tetraphosphatase, symmetrical</fullName>
        <ecNumber evidence="1">3.6.1.41</ecNumber>
    </recommendedName>
    <alternativeName>
        <fullName evidence="1">Ap4A hydrolase</fullName>
    </alternativeName>
    <alternativeName>
        <fullName evidence="1">Diadenosine 5',5'''-P1,P4-tetraphosphate pyrophosphohydrolase</fullName>
    </alternativeName>
    <alternativeName>
        <fullName evidence="1">Diadenosine tetraphosphatase</fullName>
    </alternativeName>
</protein>
<comment type="function">
    <text evidence="1">Hydrolyzes diadenosine 5',5'''-P1,P4-tetraphosphate to yield ADP.</text>
</comment>
<comment type="catalytic activity">
    <reaction evidence="1">
        <text>P(1),P(4)-bis(5'-adenosyl) tetraphosphate + H2O = 2 ADP + 2 H(+)</text>
        <dbReference type="Rhea" id="RHEA:24252"/>
        <dbReference type="ChEBI" id="CHEBI:15377"/>
        <dbReference type="ChEBI" id="CHEBI:15378"/>
        <dbReference type="ChEBI" id="CHEBI:58141"/>
        <dbReference type="ChEBI" id="CHEBI:456216"/>
        <dbReference type="EC" id="3.6.1.41"/>
    </reaction>
</comment>
<comment type="similarity">
    <text evidence="1">Belongs to the Ap4A hydrolase family.</text>
</comment>
<gene>
    <name evidence="1" type="primary">apaH</name>
    <name type="ordered locus">Pfl01_5137</name>
</gene>
<dbReference type="EC" id="3.6.1.41" evidence="1"/>
<dbReference type="EMBL" id="CP000094">
    <property type="protein sequence ID" value="ABA76874.1"/>
    <property type="molecule type" value="Genomic_DNA"/>
</dbReference>
<dbReference type="RefSeq" id="WP_011336210.1">
    <property type="nucleotide sequence ID" value="NC_007492.2"/>
</dbReference>
<dbReference type="SMR" id="Q3K5T0"/>
<dbReference type="KEGG" id="pfo:Pfl01_5137"/>
<dbReference type="eggNOG" id="COG0639">
    <property type="taxonomic scope" value="Bacteria"/>
</dbReference>
<dbReference type="HOGENOM" id="CLU_056184_2_0_6"/>
<dbReference type="Proteomes" id="UP000002704">
    <property type="component" value="Chromosome"/>
</dbReference>
<dbReference type="GO" id="GO:0008803">
    <property type="term" value="F:bis(5'-nucleosyl)-tetraphosphatase (symmetrical) activity"/>
    <property type="evidence" value="ECO:0007669"/>
    <property type="project" value="UniProtKB-UniRule"/>
</dbReference>
<dbReference type="CDD" id="cd07422">
    <property type="entry name" value="MPP_ApaH"/>
    <property type="match status" value="1"/>
</dbReference>
<dbReference type="Gene3D" id="3.60.21.10">
    <property type="match status" value="1"/>
</dbReference>
<dbReference type="HAMAP" id="MF_00199">
    <property type="entry name" value="ApaH"/>
    <property type="match status" value="1"/>
</dbReference>
<dbReference type="InterPro" id="IPR004617">
    <property type="entry name" value="ApaH"/>
</dbReference>
<dbReference type="InterPro" id="IPR004843">
    <property type="entry name" value="Calcineurin-like_PHP_ApaH"/>
</dbReference>
<dbReference type="InterPro" id="IPR029052">
    <property type="entry name" value="Metallo-depent_PP-like"/>
</dbReference>
<dbReference type="NCBIfam" id="TIGR00668">
    <property type="entry name" value="apaH"/>
    <property type="match status" value="1"/>
</dbReference>
<dbReference type="NCBIfam" id="NF001204">
    <property type="entry name" value="PRK00166.1"/>
    <property type="match status" value="1"/>
</dbReference>
<dbReference type="PANTHER" id="PTHR40942">
    <property type="match status" value="1"/>
</dbReference>
<dbReference type="PANTHER" id="PTHR40942:SF4">
    <property type="entry name" value="CYTOCHROME C5"/>
    <property type="match status" value="1"/>
</dbReference>
<dbReference type="Pfam" id="PF00149">
    <property type="entry name" value="Metallophos"/>
    <property type="match status" value="1"/>
</dbReference>
<dbReference type="PIRSF" id="PIRSF000903">
    <property type="entry name" value="B5n-ttraPtase_sm"/>
    <property type="match status" value="1"/>
</dbReference>
<dbReference type="SUPFAM" id="SSF56300">
    <property type="entry name" value="Metallo-dependent phosphatases"/>
    <property type="match status" value="1"/>
</dbReference>
<accession>Q3K5T0</accession>